<reference key="1">
    <citation type="journal article" date="2005" name="Cytogenet. Genome Res.">
        <title>ESTs from brain and testis of White Leghorn and red junglefowl: annotation, bioinformatic classification of unknown transcripts and analysis of expression levels.</title>
        <authorList>
            <person name="Savolainen P."/>
            <person name="Fitzsimmons C."/>
            <person name="Arvestad L."/>
            <person name="Andersson L."/>
            <person name="Lundeberg J."/>
        </authorList>
    </citation>
    <scope>NUCLEOTIDE SEQUENCE [LARGE SCALE MRNA]</scope>
    <source>
        <strain>White leghorn</strain>
        <tissue>Testis</tissue>
    </source>
</reference>
<dbReference type="EC" id="3.1.3.16" evidence="1"/>
<dbReference type="EC" id="3.1.3.48" evidence="1"/>
<dbReference type="EMBL" id="CN231188">
    <property type="status" value="NOT_ANNOTATED_CDS"/>
    <property type="molecule type" value="mRNA"/>
</dbReference>
<dbReference type="SMR" id="P0C597"/>
<dbReference type="FunCoup" id="P0C597">
    <property type="interactions" value="135"/>
</dbReference>
<dbReference type="STRING" id="9031.ENSGALP00000008022"/>
<dbReference type="PaxDb" id="9031-ENSGALP00000008022"/>
<dbReference type="VEuPathDB" id="HostDB:geneid_423733"/>
<dbReference type="eggNOG" id="KOG1716">
    <property type="taxonomic scope" value="Eukaryota"/>
</dbReference>
<dbReference type="HOGENOM" id="CLU_027074_11_3_1"/>
<dbReference type="InParanoid" id="P0C597"/>
<dbReference type="OrthoDB" id="10252009at2759"/>
<dbReference type="PhylomeDB" id="P0C597"/>
<dbReference type="TreeFam" id="TF105128"/>
<dbReference type="PRO" id="PR:P0C597"/>
<dbReference type="Proteomes" id="UP000000539">
    <property type="component" value="Chromosome 6"/>
</dbReference>
<dbReference type="Bgee" id="ENSGALG00000005019">
    <property type="expression patterns" value="Expressed in skeletal muscle tissue and 5 other cell types or tissues"/>
</dbReference>
<dbReference type="GO" id="GO:0005737">
    <property type="term" value="C:cytoplasm"/>
    <property type="evidence" value="ECO:0000250"/>
    <property type="project" value="UniProtKB"/>
</dbReference>
<dbReference type="GO" id="GO:0005634">
    <property type="term" value="C:nucleus"/>
    <property type="evidence" value="ECO:0000250"/>
    <property type="project" value="UniProtKB"/>
</dbReference>
<dbReference type="GO" id="GO:0033549">
    <property type="term" value="F:MAP kinase phosphatase activity"/>
    <property type="evidence" value="ECO:0000318"/>
    <property type="project" value="GO_Central"/>
</dbReference>
<dbReference type="GO" id="GO:0004722">
    <property type="term" value="F:protein serine/threonine phosphatase activity"/>
    <property type="evidence" value="ECO:0007669"/>
    <property type="project" value="UniProtKB-EC"/>
</dbReference>
<dbReference type="GO" id="GO:0004725">
    <property type="term" value="F:protein tyrosine phosphatase activity"/>
    <property type="evidence" value="ECO:0007669"/>
    <property type="project" value="UniProtKB-EC"/>
</dbReference>
<dbReference type="GO" id="GO:0008138">
    <property type="term" value="F:protein tyrosine/serine/threonine phosphatase activity"/>
    <property type="evidence" value="ECO:0000250"/>
    <property type="project" value="UniProtKB"/>
</dbReference>
<dbReference type="GO" id="GO:0043409">
    <property type="term" value="P:negative regulation of MAPK cascade"/>
    <property type="evidence" value="ECO:0000318"/>
    <property type="project" value="GO_Central"/>
</dbReference>
<dbReference type="GO" id="GO:0006470">
    <property type="term" value="P:protein dephosphorylation"/>
    <property type="evidence" value="ECO:0000250"/>
    <property type="project" value="UniProtKB"/>
</dbReference>
<dbReference type="CDD" id="cd14575">
    <property type="entry name" value="DUPD1"/>
    <property type="match status" value="1"/>
</dbReference>
<dbReference type="FunFam" id="3.90.190.10:FF:000037">
    <property type="entry name" value="dual specificity protein phosphatase 26"/>
    <property type="match status" value="1"/>
</dbReference>
<dbReference type="Gene3D" id="3.90.190.10">
    <property type="entry name" value="Protein tyrosine phosphatase superfamily"/>
    <property type="match status" value="1"/>
</dbReference>
<dbReference type="InterPro" id="IPR020405">
    <property type="entry name" value="Atypical_DUSP_subfamA"/>
</dbReference>
<dbReference type="InterPro" id="IPR000340">
    <property type="entry name" value="Dual-sp_phosphatase_cat-dom"/>
</dbReference>
<dbReference type="InterPro" id="IPR029021">
    <property type="entry name" value="Prot-tyrosine_phosphatase-like"/>
</dbReference>
<dbReference type="InterPro" id="IPR016130">
    <property type="entry name" value="Tyr_Pase_AS"/>
</dbReference>
<dbReference type="InterPro" id="IPR000387">
    <property type="entry name" value="Tyr_Pase_dom"/>
</dbReference>
<dbReference type="InterPro" id="IPR020422">
    <property type="entry name" value="TYR_PHOSPHATASE_DUAL_dom"/>
</dbReference>
<dbReference type="PANTHER" id="PTHR45682">
    <property type="entry name" value="AGAP008228-PA"/>
    <property type="match status" value="1"/>
</dbReference>
<dbReference type="PANTHER" id="PTHR45682:SF6">
    <property type="entry name" value="DUAL SPECIFICITY PHOSPHATASE 29"/>
    <property type="match status" value="1"/>
</dbReference>
<dbReference type="Pfam" id="PF00782">
    <property type="entry name" value="DSPc"/>
    <property type="match status" value="1"/>
</dbReference>
<dbReference type="PRINTS" id="PR01908">
    <property type="entry name" value="ADSPHPHTASE"/>
</dbReference>
<dbReference type="PRINTS" id="PR01909">
    <property type="entry name" value="ADSPHPHTASEA"/>
</dbReference>
<dbReference type="SMART" id="SM00195">
    <property type="entry name" value="DSPc"/>
    <property type="match status" value="1"/>
</dbReference>
<dbReference type="SUPFAM" id="SSF52799">
    <property type="entry name" value="(Phosphotyrosine protein) phosphatases II"/>
    <property type="match status" value="1"/>
</dbReference>
<dbReference type="PROSITE" id="PS00383">
    <property type="entry name" value="TYR_PHOSPHATASE_1"/>
    <property type="match status" value="1"/>
</dbReference>
<dbReference type="PROSITE" id="PS50056">
    <property type="entry name" value="TYR_PHOSPHATASE_2"/>
    <property type="match status" value="1"/>
</dbReference>
<dbReference type="PROSITE" id="PS50054">
    <property type="entry name" value="TYR_PHOSPHATASE_DUAL"/>
    <property type="match status" value="1"/>
</dbReference>
<gene>
    <name type="primary">DUSP29</name>
    <name type="synonym">DUPD1</name>
</gene>
<organism>
    <name type="scientific">Gallus gallus</name>
    <name type="common">Chicken</name>
    <dbReference type="NCBI Taxonomy" id="9031"/>
    <lineage>
        <taxon>Eukaryota</taxon>
        <taxon>Metazoa</taxon>
        <taxon>Chordata</taxon>
        <taxon>Craniata</taxon>
        <taxon>Vertebrata</taxon>
        <taxon>Euteleostomi</taxon>
        <taxon>Archelosauria</taxon>
        <taxon>Archosauria</taxon>
        <taxon>Dinosauria</taxon>
        <taxon>Saurischia</taxon>
        <taxon>Theropoda</taxon>
        <taxon>Coelurosauria</taxon>
        <taxon>Aves</taxon>
        <taxon>Neognathae</taxon>
        <taxon>Galloanserae</taxon>
        <taxon>Galliformes</taxon>
        <taxon>Phasianidae</taxon>
        <taxon>Phasianinae</taxon>
        <taxon>Gallus</taxon>
    </lineage>
</organism>
<name>DUS29_CHICK</name>
<keyword id="KW-0963">Cytoplasm</keyword>
<keyword id="KW-0378">Hydrolase</keyword>
<keyword id="KW-0539">Nucleus</keyword>
<keyword id="KW-0904">Protein phosphatase</keyword>
<keyword id="KW-1185">Reference proteome</keyword>
<evidence type="ECO:0000250" key="1">
    <source>
        <dbReference type="UniProtKB" id="Q68J44"/>
    </source>
</evidence>
<evidence type="ECO:0000250" key="2">
    <source>
        <dbReference type="UniProtKB" id="Q8BK84"/>
    </source>
</evidence>
<evidence type="ECO:0000255" key="3">
    <source>
        <dbReference type="PROSITE-ProRule" id="PRU00160"/>
    </source>
</evidence>
<evidence type="ECO:0000305" key="4"/>
<comment type="function">
    <text evidence="1 2">Dual specificity phosphatase able to dephosphorylate phosphotyrosine, phosphoserine and phosphothreonine residues within the same substrate, with a preference for phosphotyrosine as a substrate (By similarity). Involved in the modulation of AMPK and MAPK1/2 signaling pathways (By similarity).</text>
</comment>
<comment type="catalytic activity">
    <reaction evidence="1">
        <text>O-phospho-L-tyrosyl-[protein] + H2O = L-tyrosyl-[protein] + phosphate</text>
        <dbReference type="Rhea" id="RHEA:10684"/>
        <dbReference type="Rhea" id="RHEA-COMP:10136"/>
        <dbReference type="Rhea" id="RHEA-COMP:20101"/>
        <dbReference type="ChEBI" id="CHEBI:15377"/>
        <dbReference type="ChEBI" id="CHEBI:43474"/>
        <dbReference type="ChEBI" id="CHEBI:46858"/>
        <dbReference type="ChEBI" id="CHEBI:61978"/>
        <dbReference type="EC" id="3.1.3.48"/>
    </reaction>
</comment>
<comment type="catalytic activity">
    <reaction evidence="1">
        <text>O-phospho-L-seryl-[protein] + H2O = L-seryl-[protein] + phosphate</text>
        <dbReference type="Rhea" id="RHEA:20629"/>
        <dbReference type="Rhea" id="RHEA-COMP:9863"/>
        <dbReference type="Rhea" id="RHEA-COMP:11604"/>
        <dbReference type="ChEBI" id="CHEBI:15377"/>
        <dbReference type="ChEBI" id="CHEBI:29999"/>
        <dbReference type="ChEBI" id="CHEBI:43474"/>
        <dbReference type="ChEBI" id="CHEBI:83421"/>
        <dbReference type="EC" id="3.1.3.16"/>
    </reaction>
</comment>
<comment type="catalytic activity">
    <reaction evidence="1">
        <text>O-phospho-L-threonyl-[protein] + H2O = L-threonyl-[protein] + phosphate</text>
        <dbReference type="Rhea" id="RHEA:47004"/>
        <dbReference type="Rhea" id="RHEA-COMP:11060"/>
        <dbReference type="Rhea" id="RHEA-COMP:11605"/>
        <dbReference type="ChEBI" id="CHEBI:15377"/>
        <dbReference type="ChEBI" id="CHEBI:30013"/>
        <dbReference type="ChEBI" id="CHEBI:43474"/>
        <dbReference type="ChEBI" id="CHEBI:61977"/>
        <dbReference type="EC" id="3.1.3.16"/>
    </reaction>
</comment>
<comment type="subcellular location">
    <subcellularLocation>
        <location evidence="1">Cytoplasm</location>
    </subcellularLocation>
    <subcellularLocation>
        <location evidence="2">Nucleus</location>
    </subcellularLocation>
</comment>
<comment type="similarity">
    <text evidence="4">Belongs to the protein-tyrosine phosphatase family. Non-receptor class dual specificity subfamily.</text>
</comment>
<accession>P0C597</accession>
<protein>
    <recommendedName>
        <fullName>Dual specificity phosphatase 29</fullName>
    </recommendedName>
    <alternativeName>
        <fullName>Dual specificity phosphatase DUPD1</fullName>
        <ecNumber evidence="1">3.1.3.16</ecNumber>
        <ecNumber evidence="1">3.1.3.48</ecNumber>
    </alternativeName>
</protein>
<sequence length="214" mass="24322">MSSAGLNVGKKNAYTAVKVDPDGDYCTPGAFELERLFWKGCPKYTHVNEVWPNLYIGDEKTALDRYSLEKAGFTHILNAAHGQRNVDTGPEYYQDMTVEYHGVEADDLPTFKLSQFFYSASEFIDNALQDERNKVLVHCAMGRSRSATLVLAYLMIYKNMTVVDAIEQVSRHRCILPNRGFLKQLRELDIELALQRRNTKNSLPSNDDENSTTI</sequence>
<feature type="chain" id="PRO_0000295883" description="Dual specificity phosphatase 29">
    <location>
        <begin position="1"/>
        <end position="214"/>
    </location>
</feature>
<feature type="domain" description="Tyrosine-protein phosphatase" evidence="3">
    <location>
        <begin position="46"/>
        <end position="194"/>
    </location>
</feature>
<feature type="active site" description="Phosphocysteine intermediate" evidence="3">
    <location>
        <position position="139"/>
    </location>
</feature>
<feature type="binding site" evidence="1">
    <location>
        <begin position="138"/>
        <end position="145"/>
    </location>
    <ligand>
        <name>substrate</name>
    </ligand>
</feature>
<proteinExistence type="evidence at transcript level"/>